<feature type="chain" id="PRO_0000408998" description="Energy-coupling factor transporter transmembrane protein EcfT 1">
    <location>
        <begin position="1"/>
        <end position="266"/>
    </location>
</feature>
<feature type="transmembrane region" description="Helical" evidence="1">
    <location>
        <begin position="33"/>
        <end position="53"/>
    </location>
</feature>
<feature type="transmembrane region" description="Helical" evidence="1">
    <location>
        <begin position="73"/>
        <end position="93"/>
    </location>
</feature>
<feature type="transmembrane region" description="Helical" evidence="1">
    <location>
        <begin position="107"/>
        <end position="127"/>
    </location>
</feature>
<feature type="transmembrane region" description="Helical" evidence="1">
    <location>
        <begin position="152"/>
        <end position="172"/>
    </location>
</feature>
<feature type="transmembrane region" description="Helical" evidence="1">
    <location>
        <begin position="243"/>
        <end position="263"/>
    </location>
</feature>
<evidence type="ECO:0000255" key="1">
    <source>
        <dbReference type="HAMAP-Rule" id="MF_01461"/>
    </source>
</evidence>
<dbReference type="EMBL" id="CP001602">
    <property type="protein sequence ID" value="ADB66983.1"/>
    <property type="molecule type" value="Genomic_DNA"/>
</dbReference>
<dbReference type="SMR" id="D2NWE2"/>
<dbReference type="KEGG" id="lmn:LM5578_0226"/>
<dbReference type="HOGENOM" id="CLU_056469_2_2_9"/>
<dbReference type="GO" id="GO:0005886">
    <property type="term" value="C:plasma membrane"/>
    <property type="evidence" value="ECO:0007669"/>
    <property type="project" value="UniProtKB-SubCell"/>
</dbReference>
<dbReference type="GO" id="GO:0022857">
    <property type="term" value="F:transmembrane transporter activity"/>
    <property type="evidence" value="ECO:0007669"/>
    <property type="project" value="UniProtKB-UniRule"/>
</dbReference>
<dbReference type="CDD" id="cd16914">
    <property type="entry name" value="EcfT"/>
    <property type="match status" value="1"/>
</dbReference>
<dbReference type="HAMAP" id="MF_01461">
    <property type="entry name" value="EcfT"/>
    <property type="match status" value="1"/>
</dbReference>
<dbReference type="InterPro" id="IPR003339">
    <property type="entry name" value="ABC/ECF_trnsptr_transmembrane"/>
</dbReference>
<dbReference type="InterPro" id="IPR024919">
    <property type="entry name" value="EcfT"/>
</dbReference>
<dbReference type="PANTHER" id="PTHR33514">
    <property type="entry name" value="PROTEIN ABCI12, CHLOROPLASTIC"/>
    <property type="match status" value="1"/>
</dbReference>
<dbReference type="PANTHER" id="PTHR33514:SF13">
    <property type="entry name" value="PROTEIN ABCI12, CHLOROPLASTIC"/>
    <property type="match status" value="1"/>
</dbReference>
<dbReference type="Pfam" id="PF02361">
    <property type="entry name" value="CbiQ"/>
    <property type="match status" value="1"/>
</dbReference>
<accession>D2NWE2</accession>
<comment type="function">
    <text evidence="1">Transmembrane (T) component of an energy-coupling factor (ECF) ABC-transporter complex. Unlike classic ABC transporters this ECF transporter provides the energy necessary to transport a number of different substrates.</text>
</comment>
<comment type="subunit">
    <text evidence="1">Forms a stable energy-coupling factor (ECF) transporter complex composed of 2 membrane-embedded substrate-binding proteins (S component), 2 ATP-binding proteins (A component) and 2 transmembrane proteins (T component). May be able to interact with more than 1 S component at a time (By similarity).</text>
</comment>
<comment type="subcellular location">
    <subcellularLocation>
        <location evidence="1">Cell membrane</location>
        <topology evidence="1">Multi-pass membrane protein</topology>
    </subcellularLocation>
</comment>
<comment type="similarity">
    <text evidence="1">Belongs to the energy-coupling factor EcfT family.</text>
</comment>
<sequence>MIEKLILGRFVPGESLIHGLDARTKLLAGFYYIGILFLANNWWTYALMVLFTLMVVQMTGIKLKVFIKGVKPLIWLILFTVVMQILFASGGTIYFDWGPFTISSFGLLNGVFVFLRFVLIIIMSTVITLTTTPMNLTDAIAYILRPFAVLKVPVNDIALMISVALRFIPTLMGETDKIMKAQRARGVDFGEGNLFEQMKVVVPIFIPLFVSSFNRAEELADAMEARGYQGGEGRTRFRILHWHFGDLIAACVMILLTAGLVILRTS</sequence>
<name>ECFT1_LISM1</name>
<protein>
    <recommendedName>
        <fullName evidence="1">Energy-coupling factor transporter transmembrane protein EcfT 1</fullName>
        <shortName evidence="1">ECF transporter T component EcfT 1</shortName>
    </recommendedName>
</protein>
<organism>
    <name type="scientific">Listeria monocytogenes serotype 1/2a (strain 08-5578)</name>
    <dbReference type="NCBI Taxonomy" id="653938"/>
    <lineage>
        <taxon>Bacteria</taxon>
        <taxon>Bacillati</taxon>
        <taxon>Bacillota</taxon>
        <taxon>Bacilli</taxon>
        <taxon>Bacillales</taxon>
        <taxon>Listeriaceae</taxon>
        <taxon>Listeria</taxon>
    </lineage>
</organism>
<reference key="1">
    <citation type="journal article" date="2010" name="BMC Genomics">
        <title>High-throughput genome sequencing of two Listeria monocytogenes clinical isolates during a large foodborne outbreak.</title>
        <authorList>
            <person name="Gilmour M.W."/>
            <person name="Graham M."/>
            <person name="Van Domselaar G."/>
            <person name="Tyler S."/>
            <person name="Kent H."/>
            <person name="Trout-Yakel K.M."/>
            <person name="Larios O."/>
            <person name="Allen V."/>
            <person name="Lee B."/>
            <person name="Nadon C."/>
        </authorList>
    </citation>
    <scope>NUCLEOTIDE SEQUENCE [LARGE SCALE GENOMIC DNA]</scope>
    <source>
        <strain>08-5578</strain>
    </source>
</reference>
<gene>
    <name evidence="1" type="primary">ecfT1</name>
    <name type="ordered locus">LM5578_0226</name>
</gene>
<proteinExistence type="inferred from homology"/>
<keyword id="KW-1003">Cell membrane</keyword>
<keyword id="KW-0472">Membrane</keyword>
<keyword id="KW-0812">Transmembrane</keyword>
<keyword id="KW-1133">Transmembrane helix</keyword>
<keyword id="KW-0813">Transport</keyword>